<sequence length="134" mass="14264">MSYIKRDHTALRDIAMKTFLKVVGLAASLSAASVAFSSYQLIIKNNYNQTVAISLFDDQGGTHDAGEVEANGQTKITAHLDQASGFCLNVAGKREVVCSYKSGSHPNGTITIDSTGRYCIYNNTKKISGGHGCG</sequence>
<evidence type="ECO:0000255" key="1"/>
<evidence type="ECO:0000269" key="2">
    <source>
    </source>
</evidence>
<organism>
    <name type="scientific">Coxiella burnetii (strain RSA 493 / Nine Mile phase I)</name>
    <dbReference type="NCBI Taxonomy" id="227377"/>
    <lineage>
        <taxon>Bacteria</taxon>
        <taxon>Pseudomonadati</taxon>
        <taxon>Pseudomonadota</taxon>
        <taxon>Gammaproteobacteria</taxon>
        <taxon>Legionellales</taxon>
        <taxon>Coxiellaceae</taxon>
        <taxon>Coxiella</taxon>
    </lineage>
</organism>
<accession>Q83A32</accession>
<comment type="developmental stage">
    <text evidence="2">More than twofold more abundant in the small cell variant (SCV) stage than in the large cell variant (LCV) stage (at protein level). LCVs are more metabolically active than SCVs.</text>
</comment>
<keyword id="KW-1185">Reference proteome</keyword>
<keyword id="KW-0732">Signal</keyword>
<gene>
    <name type="ordered locus">CBU_2079</name>
</gene>
<name>Y2079_COXBU</name>
<feature type="signal peptide" evidence="1">
    <location>
        <begin position="1"/>
        <end position="37"/>
    </location>
</feature>
<feature type="chain" id="PRO_0000320584" description="Uncharacterized protein CBU_2079">
    <location>
        <begin position="38"/>
        <end position="134"/>
    </location>
</feature>
<dbReference type="EMBL" id="AE016828">
    <property type="protein sequence ID" value="AAO91563.1"/>
    <property type="molecule type" value="Genomic_DNA"/>
</dbReference>
<dbReference type="RefSeq" id="NP_821049.1">
    <property type="nucleotide sequence ID" value="NC_002971.4"/>
</dbReference>
<dbReference type="RefSeq" id="WP_010958637.1">
    <property type="nucleotide sequence ID" value="NZ_CDBG01000001.1"/>
</dbReference>
<dbReference type="STRING" id="227377.CBU_2079"/>
<dbReference type="EnsemblBacteria" id="AAO91563">
    <property type="protein sequence ID" value="AAO91563"/>
    <property type="gene ID" value="CBU_2079"/>
</dbReference>
<dbReference type="GeneID" id="1209992"/>
<dbReference type="KEGG" id="cbu:CBU_2079"/>
<dbReference type="HOGENOM" id="CLU_2057467_0_0_6"/>
<dbReference type="Proteomes" id="UP000002671">
    <property type="component" value="Chromosome"/>
</dbReference>
<reference key="1">
    <citation type="journal article" date="2003" name="Proc. Natl. Acad. Sci. U.S.A.">
        <title>Complete genome sequence of the Q-fever pathogen, Coxiella burnetii.</title>
        <authorList>
            <person name="Seshadri R."/>
            <person name="Paulsen I.T."/>
            <person name="Eisen J.A."/>
            <person name="Read T.D."/>
            <person name="Nelson K.E."/>
            <person name="Nelson W.C."/>
            <person name="Ward N.L."/>
            <person name="Tettelin H."/>
            <person name="Davidsen T.M."/>
            <person name="Beanan M.J."/>
            <person name="DeBoy R.T."/>
            <person name="Daugherty S.C."/>
            <person name="Brinkac L.M."/>
            <person name="Madupu R."/>
            <person name="Dodson R.J."/>
            <person name="Khouri H.M."/>
            <person name="Lee K.H."/>
            <person name="Carty H.A."/>
            <person name="Scanlan D."/>
            <person name="Heinzen R.A."/>
            <person name="Thompson H.A."/>
            <person name="Samuel J.E."/>
            <person name="Fraser C.M."/>
            <person name="Heidelberg J.F."/>
        </authorList>
    </citation>
    <scope>NUCLEOTIDE SEQUENCE [LARGE SCALE GENOMIC DNA]</scope>
    <source>
        <strain>RSA 493 / Nine Mile phase I</strain>
    </source>
</reference>
<reference key="2">
    <citation type="journal article" date="2007" name="Infect. Immun.">
        <title>Proteome and antigen profiling of Coxiella burnetii developmental forms.</title>
        <authorList>
            <person name="Coleman S.A."/>
            <person name="Fischer E.R."/>
            <person name="Cockrell D.C."/>
            <person name="Voth D.E."/>
            <person name="Howe D."/>
            <person name="Mead D.J."/>
            <person name="Samuel J.E."/>
            <person name="Heinzen R.A."/>
        </authorList>
    </citation>
    <scope>IDENTIFICATION BY MASS SPECTROMETRY</scope>
    <scope>DEVELOPMENTAL STAGE</scope>
    <source>
        <strain>Nine Mile Crazy / RSA 514</strain>
    </source>
</reference>
<proteinExistence type="evidence at protein level"/>
<protein>
    <recommendedName>
        <fullName>Uncharacterized protein CBU_2079</fullName>
    </recommendedName>
</protein>